<keyword id="KW-0227">DNA damage</keyword>
<keyword id="KW-0234">DNA repair</keyword>
<keyword id="KW-1185">Reference proteome</keyword>
<dbReference type="EMBL" id="AP006840">
    <property type="protein sequence ID" value="BAD40733.1"/>
    <property type="molecule type" value="Genomic_DNA"/>
</dbReference>
<dbReference type="RefSeq" id="WP_011195876.1">
    <property type="nucleotide sequence ID" value="NC_006177.1"/>
</dbReference>
<dbReference type="SMR" id="Q67NL0"/>
<dbReference type="STRING" id="292459.STH1748"/>
<dbReference type="KEGG" id="sth:STH1748"/>
<dbReference type="eggNOG" id="COG0323">
    <property type="taxonomic scope" value="Bacteria"/>
</dbReference>
<dbReference type="HOGENOM" id="CLU_004131_4_1_9"/>
<dbReference type="OrthoDB" id="9763467at2"/>
<dbReference type="Proteomes" id="UP000000417">
    <property type="component" value="Chromosome"/>
</dbReference>
<dbReference type="GO" id="GO:0032300">
    <property type="term" value="C:mismatch repair complex"/>
    <property type="evidence" value="ECO:0007669"/>
    <property type="project" value="InterPro"/>
</dbReference>
<dbReference type="GO" id="GO:0005524">
    <property type="term" value="F:ATP binding"/>
    <property type="evidence" value="ECO:0007669"/>
    <property type="project" value="InterPro"/>
</dbReference>
<dbReference type="GO" id="GO:0016887">
    <property type="term" value="F:ATP hydrolysis activity"/>
    <property type="evidence" value="ECO:0007669"/>
    <property type="project" value="InterPro"/>
</dbReference>
<dbReference type="GO" id="GO:0140664">
    <property type="term" value="F:ATP-dependent DNA damage sensor activity"/>
    <property type="evidence" value="ECO:0007669"/>
    <property type="project" value="InterPro"/>
</dbReference>
<dbReference type="GO" id="GO:0030983">
    <property type="term" value="F:mismatched DNA binding"/>
    <property type="evidence" value="ECO:0007669"/>
    <property type="project" value="InterPro"/>
</dbReference>
<dbReference type="GO" id="GO:0006298">
    <property type="term" value="P:mismatch repair"/>
    <property type="evidence" value="ECO:0007669"/>
    <property type="project" value="UniProtKB-UniRule"/>
</dbReference>
<dbReference type="CDD" id="cd16926">
    <property type="entry name" value="HATPase_MutL-MLH-PMS-like"/>
    <property type="match status" value="1"/>
</dbReference>
<dbReference type="CDD" id="cd00782">
    <property type="entry name" value="MutL_Trans"/>
    <property type="match status" value="1"/>
</dbReference>
<dbReference type="FunFam" id="3.30.565.10:FF:000003">
    <property type="entry name" value="DNA mismatch repair endonuclease MutL"/>
    <property type="match status" value="1"/>
</dbReference>
<dbReference type="Gene3D" id="3.30.230.10">
    <property type="match status" value="1"/>
</dbReference>
<dbReference type="Gene3D" id="3.30.565.10">
    <property type="entry name" value="Histidine kinase-like ATPase, C-terminal domain"/>
    <property type="match status" value="1"/>
</dbReference>
<dbReference type="Gene3D" id="3.30.1540.20">
    <property type="entry name" value="MutL, C-terminal domain, dimerisation subdomain"/>
    <property type="match status" value="1"/>
</dbReference>
<dbReference type="Gene3D" id="3.30.1370.100">
    <property type="entry name" value="MutL, C-terminal domain, regulatory subdomain"/>
    <property type="match status" value="1"/>
</dbReference>
<dbReference type="HAMAP" id="MF_00149">
    <property type="entry name" value="DNA_mis_repair"/>
    <property type="match status" value="1"/>
</dbReference>
<dbReference type="InterPro" id="IPR014762">
    <property type="entry name" value="DNA_mismatch_repair_CS"/>
</dbReference>
<dbReference type="InterPro" id="IPR020667">
    <property type="entry name" value="DNA_mismatch_repair_MutL"/>
</dbReference>
<dbReference type="InterPro" id="IPR013507">
    <property type="entry name" value="DNA_mismatch_S5_2-like"/>
</dbReference>
<dbReference type="InterPro" id="IPR036890">
    <property type="entry name" value="HATPase_C_sf"/>
</dbReference>
<dbReference type="InterPro" id="IPR002099">
    <property type="entry name" value="MutL/Mlh/PMS"/>
</dbReference>
<dbReference type="InterPro" id="IPR038973">
    <property type="entry name" value="MutL/Mlh/Pms-like"/>
</dbReference>
<dbReference type="InterPro" id="IPR014790">
    <property type="entry name" value="MutL_C"/>
</dbReference>
<dbReference type="InterPro" id="IPR042120">
    <property type="entry name" value="MutL_C_dimsub"/>
</dbReference>
<dbReference type="InterPro" id="IPR042121">
    <property type="entry name" value="MutL_C_regsub"/>
</dbReference>
<dbReference type="InterPro" id="IPR037198">
    <property type="entry name" value="MutL_C_sf"/>
</dbReference>
<dbReference type="InterPro" id="IPR020568">
    <property type="entry name" value="Ribosomal_Su5_D2-typ_SF"/>
</dbReference>
<dbReference type="InterPro" id="IPR014721">
    <property type="entry name" value="Ribsml_uS5_D2-typ_fold_subgr"/>
</dbReference>
<dbReference type="NCBIfam" id="TIGR00585">
    <property type="entry name" value="mutl"/>
    <property type="match status" value="1"/>
</dbReference>
<dbReference type="PANTHER" id="PTHR10073">
    <property type="entry name" value="DNA MISMATCH REPAIR PROTEIN MLH, PMS, MUTL"/>
    <property type="match status" value="1"/>
</dbReference>
<dbReference type="PANTHER" id="PTHR10073:SF12">
    <property type="entry name" value="DNA MISMATCH REPAIR PROTEIN MLH1"/>
    <property type="match status" value="1"/>
</dbReference>
<dbReference type="Pfam" id="PF01119">
    <property type="entry name" value="DNA_mis_repair"/>
    <property type="match status" value="1"/>
</dbReference>
<dbReference type="Pfam" id="PF13589">
    <property type="entry name" value="HATPase_c_3"/>
    <property type="match status" value="1"/>
</dbReference>
<dbReference type="Pfam" id="PF08676">
    <property type="entry name" value="MutL_C"/>
    <property type="match status" value="1"/>
</dbReference>
<dbReference type="SMART" id="SM01340">
    <property type="entry name" value="DNA_mis_repair"/>
    <property type="match status" value="1"/>
</dbReference>
<dbReference type="SMART" id="SM00853">
    <property type="entry name" value="MutL_C"/>
    <property type="match status" value="1"/>
</dbReference>
<dbReference type="SUPFAM" id="SSF55874">
    <property type="entry name" value="ATPase domain of HSP90 chaperone/DNA topoisomerase II/histidine kinase"/>
    <property type="match status" value="1"/>
</dbReference>
<dbReference type="SUPFAM" id="SSF118116">
    <property type="entry name" value="DNA mismatch repair protein MutL"/>
    <property type="match status" value="1"/>
</dbReference>
<dbReference type="SUPFAM" id="SSF54211">
    <property type="entry name" value="Ribosomal protein S5 domain 2-like"/>
    <property type="match status" value="1"/>
</dbReference>
<dbReference type="PROSITE" id="PS00058">
    <property type="entry name" value="DNA_MISMATCH_REPAIR_1"/>
    <property type="match status" value="1"/>
</dbReference>
<sequence length="635" mass="68299">MARIRLLDERTANQIAAGEVVERPASVVKELVENALDAQAKRIVVEVSGGGRELVRVTDDGIGMVPEDARLALQRHATSKIRTAEDLNAITTLGFRGEALPSIAAVSQFELITRPHDQLAGYRILAEGGQIVAEGEHGCPAGTRVTVRDLFFNVPARLKYLKTNATELAQIGDILTRLALANPEVAFRFQSGQAQVFATPGTGDLTAAVAALLGREMAKELLPVDYRNDAARVHGFVGRPTIARAGRSHQYFFVNRRAVRTIAARYALEEAYAHLLPNGRYPVCILFIEVEPHEVDVNVHPTKAEVRFQRDREVRAAVYQAARHALGAALLIPGTEVTADGEVRVPDRAEEKAALQRGWVPPGAGRPGEGGGRAAPPPWRVSAGGPGGQTTAREPVQAYLPAGGLQAALAQRAAEEAAAAVPAVDLAEATLVPRSAEPGELIRALRPLGQVHRSYIACDGPEGLYLIDQHAAHERIFFERLYAAAQEQATAVQRLLFPLTLDLTPAQMAIWQENAAIFAESGFEAEPFGGNTLLIHGVPAGLGTDHVARLVCDFLDRLQEDQVAPGTPVTDRRRRVLAAMAACKAAIKARDPLQPEDIAALLSDLAACASPETCPHGRPTVICVSISELEKRFKR</sequence>
<feature type="chain" id="PRO_1000096694" description="DNA mismatch repair protein MutL">
    <location>
        <begin position="1"/>
        <end position="635"/>
    </location>
</feature>
<feature type="region of interest" description="Disordered" evidence="2">
    <location>
        <begin position="352"/>
        <end position="380"/>
    </location>
</feature>
<comment type="function">
    <text evidence="1">This protein is involved in the repair of mismatches in DNA. It is required for dam-dependent methyl-directed DNA mismatch repair. May act as a 'molecular matchmaker', a protein that promotes the formation of a stable complex between two or more DNA-binding proteins in an ATP-dependent manner without itself being part of a final effector complex.</text>
</comment>
<comment type="similarity">
    <text evidence="1">Belongs to the DNA mismatch repair MutL/HexB family.</text>
</comment>
<proteinExistence type="inferred from homology"/>
<accession>Q67NL0</accession>
<protein>
    <recommendedName>
        <fullName evidence="1">DNA mismatch repair protein MutL</fullName>
    </recommendedName>
</protein>
<organism>
    <name type="scientific">Symbiobacterium thermophilum (strain DSM 24528 / JCM 14929 / IAM 14863 / T)</name>
    <dbReference type="NCBI Taxonomy" id="292459"/>
    <lineage>
        <taxon>Bacteria</taxon>
        <taxon>Bacillati</taxon>
        <taxon>Bacillota</taxon>
        <taxon>Clostridia</taxon>
        <taxon>Eubacteriales</taxon>
        <taxon>Symbiobacteriaceae</taxon>
        <taxon>Symbiobacterium</taxon>
    </lineage>
</organism>
<reference key="1">
    <citation type="journal article" date="2004" name="Nucleic Acids Res.">
        <title>Genome sequence of Symbiobacterium thermophilum, an uncultivable bacterium that depends on microbial commensalism.</title>
        <authorList>
            <person name="Ueda K."/>
            <person name="Yamashita A."/>
            <person name="Ishikawa J."/>
            <person name="Shimada M."/>
            <person name="Watsuji T."/>
            <person name="Morimura K."/>
            <person name="Ikeda H."/>
            <person name="Hattori M."/>
            <person name="Beppu T."/>
        </authorList>
    </citation>
    <scope>NUCLEOTIDE SEQUENCE [LARGE SCALE GENOMIC DNA]</scope>
    <source>
        <strain>DSM 24528 / JCM 14929 / IAM 14863 / T</strain>
    </source>
</reference>
<gene>
    <name evidence="1" type="primary">mutL</name>
    <name type="ordered locus">STH1748</name>
</gene>
<name>MUTL_SYMTH</name>
<evidence type="ECO:0000255" key="1">
    <source>
        <dbReference type="HAMAP-Rule" id="MF_00149"/>
    </source>
</evidence>
<evidence type="ECO:0000256" key="2">
    <source>
        <dbReference type="SAM" id="MobiDB-lite"/>
    </source>
</evidence>